<gene>
    <name evidence="1" type="primary">alaS</name>
    <name type="ordered locus">NMCC_1505</name>
</gene>
<dbReference type="EC" id="6.1.1.7" evidence="1"/>
<dbReference type="EMBL" id="CP000381">
    <property type="protein sequence ID" value="ABX73663.1"/>
    <property type="status" value="ALT_INIT"/>
    <property type="molecule type" value="Genomic_DNA"/>
</dbReference>
<dbReference type="RefSeq" id="WP_017629144.1">
    <property type="nucleotide sequence ID" value="NC_010120.1"/>
</dbReference>
<dbReference type="SMR" id="A9M198"/>
<dbReference type="KEGG" id="nmn:NMCC_1505"/>
<dbReference type="HOGENOM" id="CLU_004485_1_1_4"/>
<dbReference type="Proteomes" id="UP000001177">
    <property type="component" value="Chromosome"/>
</dbReference>
<dbReference type="GO" id="GO:0005829">
    <property type="term" value="C:cytosol"/>
    <property type="evidence" value="ECO:0007669"/>
    <property type="project" value="TreeGrafter"/>
</dbReference>
<dbReference type="GO" id="GO:0004813">
    <property type="term" value="F:alanine-tRNA ligase activity"/>
    <property type="evidence" value="ECO:0007669"/>
    <property type="project" value="UniProtKB-UniRule"/>
</dbReference>
<dbReference type="GO" id="GO:0002161">
    <property type="term" value="F:aminoacyl-tRNA deacylase activity"/>
    <property type="evidence" value="ECO:0007669"/>
    <property type="project" value="TreeGrafter"/>
</dbReference>
<dbReference type="GO" id="GO:0005524">
    <property type="term" value="F:ATP binding"/>
    <property type="evidence" value="ECO:0007669"/>
    <property type="project" value="UniProtKB-UniRule"/>
</dbReference>
<dbReference type="GO" id="GO:0000049">
    <property type="term" value="F:tRNA binding"/>
    <property type="evidence" value="ECO:0007669"/>
    <property type="project" value="UniProtKB-KW"/>
</dbReference>
<dbReference type="GO" id="GO:0008270">
    <property type="term" value="F:zinc ion binding"/>
    <property type="evidence" value="ECO:0007669"/>
    <property type="project" value="UniProtKB-UniRule"/>
</dbReference>
<dbReference type="GO" id="GO:0006419">
    <property type="term" value="P:alanyl-tRNA aminoacylation"/>
    <property type="evidence" value="ECO:0007669"/>
    <property type="project" value="UniProtKB-UniRule"/>
</dbReference>
<dbReference type="GO" id="GO:0045892">
    <property type="term" value="P:negative regulation of DNA-templated transcription"/>
    <property type="evidence" value="ECO:0007669"/>
    <property type="project" value="TreeGrafter"/>
</dbReference>
<dbReference type="CDD" id="cd00673">
    <property type="entry name" value="AlaRS_core"/>
    <property type="match status" value="1"/>
</dbReference>
<dbReference type="FunFam" id="2.40.30.130:FF:000001">
    <property type="entry name" value="Alanine--tRNA ligase"/>
    <property type="match status" value="1"/>
</dbReference>
<dbReference type="FunFam" id="3.10.310.40:FF:000001">
    <property type="entry name" value="Alanine--tRNA ligase"/>
    <property type="match status" value="1"/>
</dbReference>
<dbReference type="FunFam" id="3.30.54.20:FF:000001">
    <property type="entry name" value="Alanine--tRNA ligase"/>
    <property type="match status" value="1"/>
</dbReference>
<dbReference type="FunFam" id="3.30.930.10:FF:000004">
    <property type="entry name" value="Alanine--tRNA ligase"/>
    <property type="match status" value="1"/>
</dbReference>
<dbReference type="FunFam" id="3.30.980.10:FF:000004">
    <property type="entry name" value="Alanine--tRNA ligase, cytoplasmic"/>
    <property type="match status" value="1"/>
</dbReference>
<dbReference type="Gene3D" id="2.40.30.130">
    <property type="match status" value="1"/>
</dbReference>
<dbReference type="Gene3D" id="3.10.310.40">
    <property type="match status" value="1"/>
</dbReference>
<dbReference type="Gene3D" id="3.30.54.20">
    <property type="match status" value="1"/>
</dbReference>
<dbReference type="Gene3D" id="3.30.930.10">
    <property type="entry name" value="Bira Bifunctional Protein, Domain 2"/>
    <property type="match status" value="1"/>
</dbReference>
<dbReference type="Gene3D" id="3.30.980.10">
    <property type="entry name" value="Threonyl-trna Synthetase, Chain A, domain 2"/>
    <property type="match status" value="1"/>
</dbReference>
<dbReference type="HAMAP" id="MF_00036_B">
    <property type="entry name" value="Ala_tRNA_synth_B"/>
    <property type="match status" value="1"/>
</dbReference>
<dbReference type="InterPro" id="IPR045864">
    <property type="entry name" value="aa-tRNA-synth_II/BPL/LPL"/>
</dbReference>
<dbReference type="InterPro" id="IPR002318">
    <property type="entry name" value="Ala-tRNA-lgiase_IIc"/>
</dbReference>
<dbReference type="InterPro" id="IPR018162">
    <property type="entry name" value="Ala-tRNA-ligase_IIc_anticod-bd"/>
</dbReference>
<dbReference type="InterPro" id="IPR018165">
    <property type="entry name" value="Ala-tRNA-synth_IIc_core"/>
</dbReference>
<dbReference type="InterPro" id="IPR018164">
    <property type="entry name" value="Ala-tRNA-synth_IIc_N"/>
</dbReference>
<dbReference type="InterPro" id="IPR050058">
    <property type="entry name" value="Ala-tRNA_ligase"/>
</dbReference>
<dbReference type="InterPro" id="IPR023033">
    <property type="entry name" value="Ala_tRNA_ligase_euk/bac"/>
</dbReference>
<dbReference type="InterPro" id="IPR003156">
    <property type="entry name" value="DHHA1_dom"/>
</dbReference>
<dbReference type="InterPro" id="IPR018163">
    <property type="entry name" value="Thr/Ala-tRNA-synth_IIc_edit"/>
</dbReference>
<dbReference type="InterPro" id="IPR009000">
    <property type="entry name" value="Transl_B-barrel_sf"/>
</dbReference>
<dbReference type="InterPro" id="IPR012947">
    <property type="entry name" value="tRNA_SAD"/>
</dbReference>
<dbReference type="NCBIfam" id="TIGR00344">
    <property type="entry name" value="alaS"/>
    <property type="match status" value="1"/>
</dbReference>
<dbReference type="PANTHER" id="PTHR11777:SF9">
    <property type="entry name" value="ALANINE--TRNA LIGASE, CYTOPLASMIC"/>
    <property type="match status" value="1"/>
</dbReference>
<dbReference type="PANTHER" id="PTHR11777">
    <property type="entry name" value="ALANYL-TRNA SYNTHETASE"/>
    <property type="match status" value="1"/>
</dbReference>
<dbReference type="Pfam" id="PF02272">
    <property type="entry name" value="DHHA1"/>
    <property type="match status" value="1"/>
</dbReference>
<dbReference type="Pfam" id="PF01411">
    <property type="entry name" value="tRNA-synt_2c"/>
    <property type="match status" value="1"/>
</dbReference>
<dbReference type="Pfam" id="PF07973">
    <property type="entry name" value="tRNA_SAD"/>
    <property type="match status" value="1"/>
</dbReference>
<dbReference type="PRINTS" id="PR00980">
    <property type="entry name" value="TRNASYNTHALA"/>
</dbReference>
<dbReference type="SMART" id="SM00863">
    <property type="entry name" value="tRNA_SAD"/>
    <property type="match status" value="1"/>
</dbReference>
<dbReference type="SUPFAM" id="SSF55681">
    <property type="entry name" value="Class II aaRS and biotin synthetases"/>
    <property type="match status" value="1"/>
</dbReference>
<dbReference type="SUPFAM" id="SSF101353">
    <property type="entry name" value="Putative anticodon-binding domain of alanyl-tRNA synthetase (AlaRS)"/>
    <property type="match status" value="1"/>
</dbReference>
<dbReference type="SUPFAM" id="SSF55186">
    <property type="entry name" value="ThrRS/AlaRS common domain"/>
    <property type="match status" value="1"/>
</dbReference>
<dbReference type="SUPFAM" id="SSF50447">
    <property type="entry name" value="Translation proteins"/>
    <property type="match status" value="1"/>
</dbReference>
<dbReference type="PROSITE" id="PS50860">
    <property type="entry name" value="AA_TRNA_LIGASE_II_ALA"/>
    <property type="match status" value="1"/>
</dbReference>
<proteinExistence type="inferred from homology"/>
<sequence>MKTSELRQKFLKFFETKGHTVVRSSSLVPHDDPTLLFTNAGMNQFKDVFLGFDKRPYSRATTAQKCVRAGGKHNDLENVGYTARHHTFFEMMGNFSFGDYFKRDAIHFAWEFLTSPEWLNIPKDKLLATVYAEDDEAYNIWLNEIGMPSERIVRIGDNKGAKYVSDNFWQMGDTGPCGPCSEIFYDHGEEIWGGIPGSPEEDGDRWIEIWNCVFMQFNRDEQGNMNPLPKPSVDTGMGLERMAAVMQHVHSNYEIDLFQDLLKAVARETGAAFSMDEPSLKVIADHIRSCSFLIADGVLPSNEGRGYVLRRIIRRAVRHGYKLGQSKPFFHKLVADLVKEMGGAYPELKEKQAQIEEALKNEESRFAQTLETGMALLENALAKGGKTLDGEIIFKLYDTYGFPYDLTADICRERNIELDEAGFEREMEAQRARARAAQSFKANAQLPYDGQDTEFKGYSERQTESKVLALYKDGEQVNELNEGDSGAVVIDFTPFYAESGGQVGDVGYIFSSENRFEVRDTQKIKAAVFGQFGVQTSGRLKVGDSVTAKVDDEIRNANMRNHSATHLMHKALRDVLGGHVEQKGSLVTAESTRFDISHPQAVTAEEIAEVERRVNEAVLANVAVNAAIMSMEDAQKTGAMMLFGEKYGEEVRVLQMGGFSTELCGGTHVSRTGDIGLFKIISEGGIAAGVRRIEAITGLNALKWAQEQERLVKDIIAETKAQTEKDVLAKIQAGAAHAKALEKELAKAKAELAVHAGAKLLDDAKDLGAAKLVAAQIEADAAALREIVTDLTGKSDNAVILLAAVNDGKVSLCAGVSKPLTGKVKAGDLVKFAAEQVGGKGGGRPDLAQAGGTDAGKLPEMLVSVESWLCQKLS</sequence>
<feature type="chain" id="PRO_0000347694" description="Alanine--tRNA ligase">
    <location>
        <begin position="1"/>
        <end position="874"/>
    </location>
</feature>
<feature type="binding site" evidence="1">
    <location>
        <position position="562"/>
    </location>
    <ligand>
        <name>Zn(2+)</name>
        <dbReference type="ChEBI" id="CHEBI:29105"/>
    </ligand>
</feature>
<feature type="binding site" evidence="1">
    <location>
        <position position="566"/>
    </location>
    <ligand>
        <name>Zn(2+)</name>
        <dbReference type="ChEBI" id="CHEBI:29105"/>
    </ligand>
</feature>
<feature type="binding site" evidence="1">
    <location>
        <position position="664"/>
    </location>
    <ligand>
        <name>Zn(2+)</name>
        <dbReference type="ChEBI" id="CHEBI:29105"/>
    </ligand>
</feature>
<feature type="binding site" evidence="1">
    <location>
        <position position="668"/>
    </location>
    <ligand>
        <name>Zn(2+)</name>
        <dbReference type="ChEBI" id="CHEBI:29105"/>
    </ligand>
</feature>
<protein>
    <recommendedName>
        <fullName evidence="1">Alanine--tRNA ligase</fullName>
        <ecNumber evidence="1">6.1.1.7</ecNumber>
    </recommendedName>
    <alternativeName>
        <fullName evidence="1">Alanyl-tRNA synthetase</fullName>
        <shortName evidence="1">AlaRS</shortName>
    </alternativeName>
</protein>
<name>SYA_NEIM0</name>
<accession>A9M198</accession>
<keyword id="KW-0030">Aminoacyl-tRNA synthetase</keyword>
<keyword id="KW-0067">ATP-binding</keyword>
<keyword id="KW-0963">Cytoplasm</keyword>
<keyword id="KW-0436">Ligase</keyword>
<keyword id="KW-0479">Metal-binding</keyword>
<keyword id="KW-0547">Nucleotide-binding</keyword>
<keyword id="KW-0648">Protein biosynthesis</keyword>
<keyword id="KW-0694">RNA-binding</keyword>
<keyword id="KW-0820">tRNA-binding</keyword>
<keyword id="KW-0862">Zinc</keyword>
<organism>
    <name type="scientific">Neisseria meningitidis serogroup C (strain 053442)</name>
    <dbReference type="NCBI Taxonomy" id="374833"/>
    <lineage>
        <taxon>Bacteria</taxon>
        <taxon>Pseudomonadati</taxon>
        <taxon>Pseudomonadota</taxon>
        <taxon>Betaproteobacteria</taxon>
        <taxon>Neisseriales</taxon>
        <taxon>Neisseriaceae</taxon>
        <taxon>Neisseria</taxon>
    </lineage>
</organism>
<reference key="1">
    <citation type="journal article" date="2008" name="Genomics">
        <title>Characterization of ST-4821 complex, a unique Neisseria meningitidis clone.</title>
        <authorList>
            <person name="Peng J."/>
            <person name="Yang L."/>
            <person name="Yang F."/>
            <person name="Yang J."/>
            <person name="Yan Y."/>
            <person name="Nie H."/>
            <person name="Zhang X."/>
            <person name="Xiong Z."/>
            <person name="Jiang Y."/>
            <person name="Cheng F."/>
            <person name="Xu X."/>
            <person name="Chen S."/>
            <person name="Sun L."/>
            <person name="Li W."/>
            <person name="Shen Y."/>
            <person name="Shao Z."/>
            <person name="Liang X."/>
            <person name="Xu J."/>
            <person name="Jin Q."/>
        </authorList>
    </citation>
    <scope>NUCLEOTIDE SEQUENCE [LARGE SCALE GENOMIC DNA]</scope>
    <source>
        <strain>053442</strain>
    </source>
</reference>
<evidence type="ECO:0000255" key="1">
    <source>
        <dbReference type="HAMAP-Rule" id="MF_00036"/>
    </source>
</evidence>
<evidence type="ECO:0000305" key="2"/>
<comment type="function">
    <text evidence="1">Catalyzes the attachment of alanine to tRNA(Ala) in a two-step reaction: alanine is first activated by ATP to form Ala-AMP and then transferred to the acceptor end of tRNA(Ala). Also edits incorrectly charged Ser-tRNA(Ala) and Gly-tRNA(Ala) via its editing domain.</text>
</comment>
<comment type="catalytic activity">
    <reaction evidence="1">
        <text>tRNA(Ala) + L-alanine + ATP = L-alanyl-tRNA(Ala) + AMP + diphosphate</text>
        <dbReference type="Rhea" id="RHEA:12540"/>
        <dbReference type="Rhea" id="RHEA-COMP:9657"/>
        <dbReference type="Rhea" id="RHEA-COMP:9923"/>
        <dbReference type="ChEBI" id="CHEBI:30616"/>
        <dbReference type="ChEBI" id="CHEBI:33019"/>
        <dbReference type="ChEBI" id="CHEBI:57972"/>
        <dbReference type="ChEBI" id="CHEBI:78442"/>
        <dbReference type="ChEBI" id="CHEBI:78497"/>
        <dbReference type="ChEBI" id="CHEBI:456215"/>
        <dbReference type="EC" id="6.1.1.7"/>
    </reaction>
</comment>
<comment type="cofactor">
    <cofactor evidence="1">
        <name>Zn(2+)</name>
        <dbReference type="ChEBI" id="CHEBI:29105"/>
    </cofactor>
    <text evidence="1">Binds 1 zinc ion per subunit.</text>
</comment>
<comment type="subcellular location">
    <subcellularLocation>
        <location evidence="1">Cytoplasm</location>
    </subcellularLocation>
</comment>
<comment type="domain">
    <text evidence="1">Consists of three domains; the N-terminal catalytic domain, the editing domain and the C-terminal C-Ala domain. The editing domain removes incorrectly charged amino acids, while the C-Ala domain, along with tRNA(Ala), serves as a bridge to cooperatively bring together the editing and aminoacylation centers thus stimulating deacylation of misacylated tRNAs.</text>
</comment>
<comment type="similarity">
    <text evidence="1">Belongs to the class-II aminoacyl-tRNA synthetase family.</text>
</comment>
<comment type="sequence caution" evidence="2">
    <conflict type="erroneous initiation">
        <sequence resource="EMBL-CDS" id="ABX73663"/>
    </conflict>
</comment>